<accession>Q80TS3</accession>
<accession>Q3UHI7</accession>
<accession>Q3UM79</accession>
<accession>Q504Z9</accession>
<accession>Q5HZJ6</accession>
<accession>Q80T56</accession>
<gene>
    <name evidence="25" type="primary">Adgrl3</name>
    <name evidence="21 25" type="synonym">Kiaa0768</name>
    <name evidence="25" type="synonym">Lec3</name>
    <name evidence="20" type="synonym">Lphn3</name>
</gene>
<evidence type="ECO:0000250" key="1">
    <source>
        <dbReference type="UniProtKB" id="Q9HAR2"/>
    </source>
</evidence>
<evidence type="ECO:0000255" key="2"/>
<evidence type="ECO:0000255" key="3">
    <source>
        <dbReference type="PROSITE-ProRule" id="PRU00098"/>
    </source>
</evidence>
<evidence type="ECO:0000255" key="4">
    <source>
        <dbReference type="PROSITE-ProRule" id="PRU00260"/>
    </source>
</evidence>
<evidence type="ECO:0000255" key="5">
    <source>
        <dbReference type="PROSITE-ProRule" id="PRU00446"/>
    </source>
</evidence>
<evidence type="ECO:0000256" key="6">
    <source>
        <dbReference type="SAM" id="MobiDB-lite"/>
    </source>
</evidence>
<evidence type="ECO:0000269" key="7">
    <source>
    </source>
</evidence>
<evidence type="ECO:0000269" key="8">
    <source>
    </source>
</evidence>
<evidence type="ECO:0000269" key="9">
    <source>
    </source>
</evidence>
<evidence type="ECO:0000269" key="10">
    <source>
    </source>
</evidence>
<evidence type="ECO:0000269" key="11">
    <source>
    </source>
</evidence>
<evidence type="ECO:0000269" key="12">
    <source>
    </source>
</evidence>
<evidence type="ECO:0000269" key="13">
    <source>
    </source>
</evidence>
<evidence type="ECO:0000269" key="14">
    <source>
    </source>
</evidence>
<evidence type="ECO:0000269" key="15">
    <source>
    </source>
</evidence>
<evidence type="ECO:0000269" key="16">
    <source>
    </source>
</evidence>
<evidence type="ECO:0000269" key="17">
    <source>
    </source>
</evidence>
<evidence type="ECO:0000303" key="18">
    <source>
    </source>
</evidence>
<evidence type="ECO:0000303" key="19">
    <source>
    </source>
</evidence>
<evidence type="ECO:0000303" key="20">
    <source>
    </source>
</evidence>
<evidence type="ECO:0000303" key="21">
    <source>
    </source>
</evidence>
<evidence type="ECO:0000303" key="22">
    <source>
    </source>
</evidence>
<evidence type="ECO:0000305" key="23"/>
<evidence type="ECO:0000305" key="24">
    <source>
    </source>
</evidence>
<evidence type="ECO:0000312" key="25">
    <source>
        <dbReference type="MGI" id="MGI:2441950"/>
    </source>
</evidence>
<evidence type="ECO:0007744" key="26">
    <source>
        <dbReference type="PDB" id="5AFB"/>
    </source>
</evidence>
<evidence type="ECO:0007744" key="27">
    <source>
        <dbReference type="PDB" id="7WY5"/>
    </source>
</evidence>
<evidence type="ECO:0007744" key="28">
    <source>
        <dbReference type="PDB" id="7WY8"/>
    </source>
</evidence>
<evidence type="ECO:0007744" key="29">
    <source>
        <dbReference type="PDB" id="7WYB"/>
    </source>
</evidence>
<evidence type="ECO:0007744" key="30">
    <source>
        <dbReference type="PDB" id="7X10"/>
    </source>
</evidence>
<evidence type="ECO:0007744" key="31">
    <source>
    </source>
</evidence>
<evidence type="ECO:0007829" key="32">
    <source>
        <dbReference type="PDB" id="4RMK"/>
    </source>
</evidence>
<evidence type="ECO:0007829" key="33">
    <source>
        <dbReference type="PDB" id="4RML"/>
    </source>
</evidence>
<evidence type="ECO:0007829" key="34">
    <source>
        <dbReference type="PDB" id="5FTT"/>
    </source>
</evidence>
<evidence type="ECO:0007829" key="35">
    <source>
        <dbReference type="PDB" id="6JBU"/>
    </source>
</evidence>
<evidence type="ECO:0007829" key="36">
    <source>
        <dbReference type="PDB" id="7WY5"/>
    </source>
</evidence>
<evidence type="ECO:0007829" key="37">
    <source>
        <dbReference type="PDB" id="7WYB"/>
    </source>
</evidence>
<evidence type="ECO:0007829" key="38">
    <source>
        <dbReference type="PDB" id="7X10"/>
    </source>
</evidence>
<dbReference type="EMBL" id="AK145069">
    <property type="protein sequence ID" value="BAE26219.1"/>
    <property type="molecule type" value="mRNA"/>
</dbReference>
<dbReference type="EMBL" id="AK147374">
    <property type="protein sequence ID" value="BAE27870.1"/>
    <property type="molecule type" value="mRNA"/>
</dbReference>
<dbReference type="EMBL" id="BC058992">
    <property type="protein sequence ID" value="AAH58992.1"/>
    <property type="molecule type" value="mRNA"/>
</dbReference>
<dbReference type="EMBL" id="BC088989">
    <property type="protein sequence ID" value="AAH88989.1"/>
    <property type="molecule type" value="mRNA"/>
</dbReference>
<dbReference type="EMBL" id="BC094668">
    <property type="protein sequence ID" value="AAH94668.1"/>
    <property type="molecule type" value="mRNA"/>
</dbReference>
<dbReference type="EMBL" id="AK122367">
    <property type="protein sequence ID" value="BAC65649.1"/>
    <property type="molecule type" value="mRNA"/>
</dbReference>
<dbReference type="EMBL" id="AY255584">
    <property type="protein sequence ID" value="AAO85096.1"/>
    <property type="molecule type" value="mRNA"/>
</dbReference>
<dbReference type="CCDS" id="CCDS39122.1">
    <molecule id="Q80TS3-3"/>
</dbReference>
<dbReference type="CCDS" id="CCDS84894.1">
    <molecule id="Q80TS3-5"/>
</dbReference>
<dbReference type="RefSeq" id="NP_001334298.1">
    <molecule id="Q80TS3-5"/>
    <property type="nucleotide sequence ID" value="NM_001347369.2"/>
</dbReference>
<dbReference type="RefSeq" id="NP_001346755.1">
    <molecule id="Q80TS3-4"/>
    <property type="nucleotide sequence ID" value="NM_001359826.1"/>
</dbReference>
<dbReference type="RefSeq" id="NP_001346757.1">
    <molecule id="Q80TS3-1"/>
    <property type="nucleotide sequence ID" value="NM_001359828.1"/>
</dbReference>
<dbReference type="RefSeq" id="NP_001346760.1">
    <molecule id="Q80TS3-1"/>
    <property type="nucleotide sequence ID" value="NM_001359831.1"/>
</dbReference>
<dbReference type="RefSeq" id="NP_941991.1">
    <molecule id="Q80TS3-3"/>
    <property type="nucleotide sequence ID" value="NM_198702.3"/>
</dbReference>
<dbReference type="RefSeq" id="XP_011247767.1">
    <molecule id="Q80TS3-3"/>
    <property type="nucleotide sequence ID" value="XM_011249465.4"/>
</dbReference>
<dbReference type="RefSeq" id="XP_011247768.1">
    <property type="nucleotide sequence ID" value="XM_011249466.2"/>
</dbReference>
<dbReference type="RefSeq" id="XP_011247773.1">
    <molecule id="Q80TS3-2"/>
    <property type="nucleotide sequence ID" value="XM_011249471.4"/>
</dbReference>
<dbReference type="RefSeq" id="XP_017176402.1">
    <property type="nucleotide sequence ID" value="XM_017320913.1"/>
</dbReference>
<dbReference type="PDB" id="4RMK">
    <property type="method" value="X-ray"/>
    <property type="resolution" value="1.61 A"/>
    <property type="chains" value="A=199-495"/>
</dbReference>
<dbReference type="PDB" id="4RML">
    <property type="method" value="X-ray"/>
    <property type="resolution" value="1.60 A"/>
    <property type="chains" value="A=199-495"/>
</dbReference>
<dbReference type="PDB" id="4YEB">
    <property type="method" value="X-ray"/>
    <property type="resolution" value="3.19 A"/>
    <property type="chains" value="A=199-495"/>
</dbReference>
<dbReference type="PDB" id="5AFB">
    <property type="method" value="X-ray"/>
    <property type="resolution" value="2.16 A"/>
    <property type="chains" value="A=97-459"/>
</dbReference>
<dbReference type="PDB" id="5FTT">
    <property type="method" value="X-ray"/>
    <property type="resolution" value="3.40 A"/>
    <property type="chains" value="C/D/G/H=92-463"/>
</dbReference>
<dbReference type="PDB" id="5FTU">
    <property type="method" value="X-ray"/>
    <property type="resolution" value="6.01 A"/>
    <property type="chains" value="C/D/G/H/K/L=92-463"/>
</dbReference>
<dbReference type="PDB" id="6JBU">
    <property type="method" value="X-ray"/>
    <property type="resolution" value="1.85 A"/>
    <property type="chains" value="A=203-461"/>
</dbReference>
<dbReference type="PDB" id="7WY5">
    <property type="method" value="EM"/>
    <property type="resolution" value="2.83 A"/>
    <property type="chains" value="R=1-1537"/>
</dbReference>
<dbReference type="PDB" id="7WY8">
    <property type="method" value="EM"/>
    <property type="resolution" value="2.83 A"/>
    <property type="chains" value="R=1-1537"/>
</dbReference>
<dbReference type="PDB" id="7WYB">
    <property type="method" value="EM"/>
    <property type="resolution" value="2.97 A"/>
    <property type="chains" value="R=1-1537"/>
</dbReference>
<dbReference type="PDB" id="7X10">
    <property type="method" value="EM"/>
    <property type="resolution" value="2.93 A"/>
    <property type="chains" value="R=1-1537"/>
</dbReference>
<dbReference type="PDBsum" id="4RMK"/>
<dbReference type="PDBsum" id="4RML"/>
<dbReference type="PDBsum" id="4YEB"/>
<dbReference type="PDBsum" id="5AFB"/>
<dbReference type="PDBsum" id="5FTT"/>
<dbReference type="PDBsum" id="5FTU"/>
<dbReference type="PDBsum" id="6JBU"/>
<dbReference type="PDBsum" id="7WY5"/>
<dbReference type="PDBsum" id="7WY8"/>
<dbReference type="PDBsum" id="7WYB"/>
<dbReference type="PDBsum" id="7X10"/>
<dbReference type="EMDB" id="EMD-32884"/>
<dbReference type="EMDB" id="EMD-32887"/>
<dbReference type="EMDB" id="EMD-32890"/>
<dbReference type="EMDB" id="EMD-32932"/>
<dbReference type="SMR" id="Q80TS3"/>
<dbReference type="BioGRID" id="235241">
    <property type="interactions" value="14"/>
</dbReference>
<dbReference type="DIP" id="DIP-32218N"/>
<dbReference type="FunCoup" id="Q80TS3">
    <property type="interactions" value="1052"/>
</dbReference>
<dbReference type="IntAct" id="Q80TS3">
    <property type="interactions" value="4"/>
</dbReference>
<dbReference type="MINT" id="Q80TS3"/>
<dbReference type="STRING" id="10090.ENSMUSP00000072336"/>
<dbReference type="MEROPS" id="P02.011"/>
<dbReference type="GlyConnect" id="2419">
    <molecule id="Q80TS3-2"/>
    <property type="glycosylation" value="9 N-Linked glycans (5 sites)"/>
</dbReference>
<dbReference type="GlyCosmos" id="Q80TS3">
    <property type="glycosylation" value="10 sites, 9 glycans"/>
</dbReference>
<dbReference type="GlyGen" id="Q80TS3">
    <property type="glycosylation" value="12 sites, 10 N-linked glycans (5 sites), 1 O-linked glycan (2 sites)"/>
</dbReference>
<dbReference type="iPTMnet" id="Q80TS3"/>
<dbReference type="PhosphoSitePlus" id="Q80TS3"/>
<dbReference type="SwissPalm" id="Q80TS3"/>
<dbReference type="PaxDb" id="10090-ENSMUSP00000113482"/>
<dbReference type="PeptideAtlas" id="Q80TS3"/>
<dbReference type="ProteomicsDB" id="285776">
    <molecule id="Q80TS3-1"/>
</dbReference>
<dbReference type="ProteomicsDB" id="285777">
    <molecule id="Q80TS3-2"/>
</dbReference>
<dbReference type="ProteomicsDB" id="285778">
    <molecule id="Q80TS3-3"/>
</dbReference>
<dbReference type="ProteomicsDB" id="285779">
    <molecule id="Q80TS3-4"/>
</dbReference>
<dbReference type="ProteomicsDB" id="285780">
    <molecule id="Q80TS3-5"/>
</dbReference>
<dbReference type="ProteomicsDB" id="285781">
    <molecule id="Q80TS3-6"/>
</dbReference>
<dbReference type="Pumba" id="Q80TS3"/>
<dbReference type="Antibodypedia" id="2755">
    <property type="antibodies" value="171 antibodies from 30 providers"/>
</dbReference>
<dbReference type="DNASU" id="319387"/>
<dbReference type="Ensembl" id="ENSMUST00000072521.11">
    <molecule id="Q80TS3-3"/>
    <property type="protein sequence ID" value="ENSMUSP00000072336.5"/>
    <property type="gene ID" value="ENSMUSG00000037605.18"/>
</dbReference>
<dbReference type="Ensembl" id="ENSMUST00000117407.8">
    <molecule id="Q80TS3-2"/>
    <property type="protein sequence ID" value="ENSMUSP00000112388.2"/>
    <property type="gene ID" value="ENSMUSG00000037605.18"/>
</dbReference>
<dbReference type="Ensembl" id="ENSMUST00000122356.8">
    <molecule id="Q80TS3-5"/>
    <property type="protein sequence ID" value="ENSMUSP00000113600.2"/>
    <property type="gene ID" value="ENSMUSG00000037605.18"/>
</dbReference>
<dbReference type="GeneID" id="319387"/>
<dbReference type="KEGG" id="mmu:319387"/>
<dbReference type="UCSC" id="uc008xwk.1">
    <molecule id="Q80TS3-6"/>
    <property type="organism name" value="mouse"/>
</dbReference>
<dbReference type="UCSC" id="uc008xwn.1">
    <molecule id="Q80TS3-1"/>
    <property type="organism name" value="mouse"/>
</dbReference>
<dbReference type="UCSC" id="uc008xwp.1">
    <molecule id="Q80TS3-3"/>
    <property type="organism name" value="mouse"/>
</dbReference>
<dbReference type="AGR" id="MGI:2441950"/>
<dbReference type="CTD" id="23284"/>
<dbReference type="MGI" id="MGI:2441950">
    <property type="gene designation" value="Adgrl3"/>
</dbReference>
<dbReference type="VEuPathDB" id="HostDB:ENSMUSG00000037605"/>
<dbReference type="eggNOG" id="KOG3545">
    <property type="taxonomic scope" value="Eukaryota"/>
</dbReference>
<dbReference type="eggNOG" id="KOG4193">
    <property type="taxonomic scope" value="Eukaryota"/>
</dbReference>
<dbReference type="eggNOG" id="KOG4729">
    <property type="taxonomic scope" value="Eukaryota"/>
</dbReference>
<dbReference type="GeneTree" id="ENSGT00940000155527"/>
<dbReference type="InParanoid" id="Q80TS3"/>
<dbReference type="PhylomeDB" id="Q80TS3"/>
<dbReference type="BioGRID-ORCS" id="319387">
    <property type="hits" value="3 hits in 60 CRISPR screens"/>
</dbReference>
<dbReference type="CD-CODE" id="CE726F99">
    <property type="entry name" value="Postsynaptic density"/>
</dbReference>
<dbReference type="ChiTaRS" id="Adgrl3">
    <property type="organism name" value="mouse"/>
</dbReference>
<dbReference type="EvolutionaryTrace" id="Q80TS3"/>
<dbReference type="PRO" id="PR:Q80TS3"/>
<dbReference type="Proteomes" id="UP000000589">
    <property type="component" value="Chromosome 5"/>
</dbReference>
<dbReference type="RNAct" id="Q80TS3">
    <property type="molecule type" value="protein"/>
</dbReference>
<dbReference type="Bgee" id="ENSMUSG00000037605">
    <property type="expression patterns" value="Expressed in CA1 field of hippocampus and 179 other cell types or tissues"/>
</dbReference>
<dbReference type="ExpressionAtlas" id="Q80TS3">
    <property type="expression patterns" value="baseline and differential"/>
</dbReference>
<dbReference type="GO" id="GO:0030424">
    <property type="term" value="C:axon"/>
    <property type="evidence" value="ECO:0000314"/>
    <property type="project" value="UniProtKB"/>
</dbReference>
<dbReference type="GO" id="GO:0005911">
    <property type="term" value="C:cell-cell junction"/>
    <property type="evidence" value="ECO:0000314"/>
    <property type="project" value="UniProtKB"/>
</dbReference>
<dbReference type="GO" id="GO:0098978">
    <property type="term" value="C:glutamatergic synapse"/>
    <property type="evidence" value="ECO:0000314"/>
    <property type="project" value="SynGO"/>
</dbReference>
<dbReference type="GO" id="GO:0005886">
    <property type="term" value="C:plasma membrane"/>
    <property type="evidence" value="ECO:0000314"/>
    <property type="project" value="UniProtKB"/>
</dbReference>
<dbReference type="GO" id="GO:0045211">
    <property type="term" value="C:postsynaptic membrane"/>
    <property type="evidence" value="ECO:0000314"/>
    <property type="project" value="SynGO"/>
</dbReference>
<dbReference type="GO" id="GO:0098685">
    <property type="term" value="C:Schaffer collateral - CA1 synapse"/>
    <property type="evidence" value="ECO:0000314"/>
    <property type="project" value="SynGO"/>
</dbReference>
<dbReference type="GO" id="GO:0005509">
    <property type="term" value="F:calcium ion binding"/>
    <property type="evidence" value="ECO:0000314"/>
    <property type="project" value="UniProtKB"/>
</dbReference>
<dbReference type="GO" id="GO:0030246">
    <property type="term" value="F:carbohydrate binding"/>
    <property type="evidence" value="ECO:0007669"/>
    <property type="project" value="UniProtKB-KW"/>
</dbReference>
<dbReference type="GO" id="GO:0098631">
    <property type="term" value="F:cell adhesion mediator activity"/>
    <property type="evidence" value="ECO:0000314"/>
    <property type="project" value="UniProtKB"/>
</dbReference>
<dbReference type="GO" id="GO:0004930">
    <property type="term" value="F:G protein-coupled receptor activity"/>
    <property type="evidence" value="ECO:0000314"/>
    <property type="project" value="UniProtKB"/>
</dbReference>
<dbReference type="GO" id="GO:0140693">
    <property type="term" value="F:molecular condensate scaffold activity"/>
    <property type="evidence" value="ECO:0000314"/>
    <property type="project" value="UniProtKB"/>
</dbReference>
<dbReference type="GO" id="GO:0007189">
    <property type="term" value="P:adenylate cyclase-activating G protein-coupled receptor signaling pathway"/>
    <property type="evidence" value="ECO:0000314"/>
    <property type="project" value="UniProtKB"/>
</dbReference>
<dbReference type="GO" id="GO:0007166">
    <property type="term" value="P:cell surface receptor signaling pathway"/>
    <property type="evidence" value="ECO:0007669"/>
    <property type="project" value="InterPro"/>
</dbReference>
<dbReference type="GO" id="GO:0098742">
    <property type="term" value="P:cell-cell adhesion via plasma-membrane adhesion molecules"/>
    <property type="evidence" value="ECO:0000315"/>
    <property type="project" value="UniProtKB"/>
</dbReference>
<dbReference type="GO" id="GO:1904861">
    <property type="term" value="P:excitatory synapse assembly"/>
    <property type="evidence" value="ECO:0000314"/>
    <property type="project" value="UniProtKB"/>
</dbReference>
<dbReference type="GO" id="GO:0031987">
    <property type="term" value="P:locomotion involved in locomotory behavior"/>
    <property type="evidence" value="ECO:0000315"/>
    <property type="project" value="UniProtKB"/>
</dbReference>
<dbReference type="GO" id="GO:0098880">
    <property type="term" value="P:maintenance of postsynaptic specialization structure"/>
    <property type="evidence" value="ECO:0000314"/>
    <property type="project" value="SynGO"/>
</dbReference>
<dbReference type="GO" id="GO:0001764">
    <property type="term" value="P:neuron migration"/>
    <property type="evidence" value="ECO:0000315"/>
    <property type="project" value="UniProtKB"/>
</dbReference>
<dbReference type="GO" id="GO:0051965">
    <property type="term" value="P:positive regulation of synapse assembly"/>
    <property type="evidence" value="ECO:0000314"/>
    <property type="project" value="MGI"/>
</dbReference>
<dbReference type="GO" id="GO:0042220">
    <property type="term" value="P:response to cocaine"/>
    <property type="evidence" value="ECO:0000315"/>
    <property type="project" value="UniProtKB"/>
</dbReference>
<dbReference type="GO" id="GO:0160221">
    <property type="term" value="P:Rho-activating G protein-coupled receptor signaling pathway"/>
    <property type="evidence" value="ECO:0000314"/>
    <property type="project" value="UniProtKB"/>
</dbReference>
<dbReference type="GO" id="GO:0007416">
    <property type="term" value="P:synapse assembly"/>
    <property type="evidence" value="ECO:0000314"/>
    <property type="project" value="UniProtKB"/>
</dbReference>
<dbReference type="GO" id="GO:0050808">
    <property type="term" value="P:synapse organization"/>
    <property type="evidence" value="ECO:0000314"/>
    <property type="project" value="SynGO"/>
</dbReference>
<dbReference type="CDD" id="cd16005">
    <property type="entry name" value="7tmB2_Latrophilin-3"/>
    <property type="match status" value="1"/>
</dbReference>
<dbReference type="CDD" id="cd22846">
    <property type="entry name" value="Gal_Rha_Lectin_LPHN3"/>
    <property type="match status" value="1"/>
</dbReference>
<dbReference type="FunFam" id="1.20.1070.10:FF:000011">
    <property type="entry name" value="Adhesion G protein-coupled receptor L2"/>
    <property type="match status" value="1"/>
</dbReference>
<dbReference type="FunFam" id="2.60.120.740:FF:000001">
    <property type="entry name" value="Adhesion G protein-coupled receptor L2"/>
    <property type="match status" value="1"/>
</dbReference>
<dbReference type="FunFam" id="2.60.220.50:FF:000001">
    <property type="entry name" value="Adhesion G protein-coupled receptor L2"/>
    <property type="match status" value="1"/>
</dbReference>
<dbReference type="FunFam" id="4.10.1240.10:FF:000004">
    <property type="entry name" value="Adhesion G protein-coupled receptor L3"/>
    <property type="match status" value="1"/>
</dbReference>
<dbReference type="FunFam" id="1.25.40.610:FF:000003">
    <property type="entry name" value="adhesion G protein-coupled receptor L3"/>
    <property type="match status" value="1"/>
</dbReference>
<dbReference type="Gene3D" id="1.25.40.610">
    <property type="match status" value="1"/>
</dbReference>
<dbReference type="Gene3D" id="2.60.120.740">
    <property type="match status" value="1"/>
</dbReference>
<dbReference type="Gene3D" id="2.60.220.50">
    <property type="match status" value="1"/>
</dbReference>
<dbReference type="Gene3D" id="4.10.1240.10">
    <property type="entry name" value="GPCR, family 2, extracellular hormone receptor domain"/>
    <property type="match status" value="1"/>
</dbReference>
<dbReference type="Gene3D" id="1.20.1070.10">
    <property type="entry name" value="Rhodopsin 7-helix transmembrane proteins"/>
    <property type="match status" value="1"/>
</dbReference>
<dbReference type="InterPro" id="IPR057244">
    <property type="entry name" value="GAIN_B"/>
</dbReference>
<dbReference type="InterPro" id="IPR032471">
    <property type="entry name" value="GAIN_dom_N"/>
</dbReference>
<dbReference type="InterPro" id="IPR046338">
    <property type="entry name" value="GAIN_dom_sf"/>
</dbReference>
<dbReference type="InterPro" id="IPR017981">
    <property type="entry name" value="GPCR_2-like_7TM"/>
</dbReference>
<dbReference type="InterPro" id="IPR036445">
    <property type="entry name" value="GPCR_2_extracell_dom_sf"/>
</dbReference>
<dbReference type="InterPro" id="IPR001879">
    <property type="entry name" value="GPCR_2_extracellular_dom"/>
</dbReference>
<dbReference type="InterPro" id="IPR003924">
    <property type="entry name" value="GPCR_2_latrophilin"/>
</dbReference>
<dbReference type="InterPro" id="IPR003334">
    <property type="entry name" value="GPCR_2_latrophilin_rcpt_C"/>
</dbReference>
<dbReference type="InterPro" id="IPR000832">
    <property type="entry name" value="GPCR_2_secretin-like"/>
</dbReference>
<dbReference type="InterPro" id="IPR017983">
    <property type="entry name" value="GPCR_2_secretin-like_CS"/>
</dbReference>
<dbReference type="InterPro" id="IPR000203">
    <property type="entry name" value="GPS"/>
</dbReference>
<dbReference type="InterPro" id="IPR000922">
    <property type="entry name" value="Lectin_gal-bd_dom"/>
</dbReference>
<dbReference type="InterPro" id="IPR043159">
    <property type="entry name" value="Lectin_gal-bd_sf"/>
</dbReference>
<dbReference type="InterPro" id="IPR003112">
    <property type="entry name" value="Olfac-like_dom"/>
</dbReference>
<dbReference type="PANTHER" id="PTHR12011:SF60">
    <property type="entry name" value="ADHESION G PROTEIN-COUPLED RECEPTOR L3"/>
    <property type="match status" value="1"/>
</dbReference>
<dbReference type="PANTHER" id="PTHR12011">
    <property type="entry name" value="ADHESION G-PROTEIN COUPLED RECEPTOR"/>
    <property type="match status" value="1"/>
</dbReference>
<dbReference type="Pfam" id="PF00002">
    <property type="entry name" value="7tm_2"/>
    <property type="match status" value="1"/>
</dbReference>
<dbReference type="Pfam" id="PF16489">
    <property type="entry name" value="GAIN"/>
    <property type="match status" value="1"/>
</dbReference>
<dbReference type="Pfam" id="PF01825">
    <property type="entry name" value="GPS"/>
    <property type="match status" value="1"/>
</dbReference>
<dbReference type="Pfam" id="PF02793">
    <property type="entry name" value="HRM"/>
    <property type="match status" value="1"/>
</dbReference>
<dbReference type="Pfam" id="PF02354">
    <property type="entry name" value="Latrophilin"/>
    <property type="match status" value="2"/>
</dbReference>
<dbReference type="Pfam" id="PF02191">
    <property type="entry name" value="OLF"/>
    <property type="match status" value="1"/>
</dbReference>
<dbReference type="Pfam" id="PF02140">
    <property type="entry name" value="SUEL_Lectin"/>
    <property type="match status" value="1"/>
</dbReference>
<dbReference type="PRINTS" id="PR00249">
    <property type="entry name" value="GPCRSECRETIN"/>
</dbReference>
<dbReference type="PRINTS" id="PR01444">
    <property type="entry name" value="LATROPHILIN"/>
</dbReference>
<dbReference type="SMART" id="SM00303">
    <property type="entry name" value="GPS"/>
    <property type="match status" value="1"/>
</dbReference>
<dbReference type="SMART" id="SM00008">
    <property type="entry name" value="HormR"/>
    <property type="match status" value="1"/>
</dbReference>
<dbReference type="SMART" id="SM00284">
    <property type="entry name" value="OLF"/>
    <property type="match status" value="1"/>
</dbReference>
<dbReference type="SUPFAM" id="SSF81321">
    <property type="entry name" value="Family A G protein-coupled receptor-like"/>
    <property type="match status" value="1"/>
</dbReference>
<dbReference type="PROSITE" id="PS00650">
    <property type="entry name" value="G_PROTEIN_RECEP_F2_2"/>
    <property type="match status" value="1"/>
</dbReference>
<dbReference type="PROSITE" id="PS50227">
    <property type="entry name" value="G_PROTEIN_RECEP_F2_3"/>
    <property type="match status" value="1"/>
</dbReference>
<dbReference type="PROSITE" id="PS50261">
    <property type="entry name" value="G_PROTEIN_RECEP_F2_4"/>
    <property type="match status" value="1"/>
</dbReference>
<dbReference type="PROSITE" id="PS50221">
    <property type="entry name" value="GAIN_B"/>
    <property type="match status" value="1"/>
</dbReference>
<dbReference type="PROSITE" id="PS51132">
    <property type="entry name" value="OLF"/>
    <property type="match status" value="1"/>
</dbReference>
<dbReference type="PROSITE" id="PS50228">
    <property type="entry name" value="SUEL_LECTIN"/>
    <property type="match status" value="1"/>
</dbReference>
<feature type="signal peptide" evidence="2">
    <location>
        <begin position="1"/>
        <end position="19"/>
    </location>
</feature>
<feature type="chain" id="PRO_0000070344" description="Adhesion G protein-coupled receptor L3">
    <location>
        <begin position="20"/>
        <end position="1537"/>
    </location>
</feature>
<feature type="topological domain" description="Extracellular" evidence="15 27 28 29 30">
    <location>
        <begin position="20"/>
        <end position="943"/>
    </location>
</feature>
<feature type="transmembrane region" description="Helical; Name=1" evidence="15 27 28 29 30">
    <location>
        <begin position="944"/>
        <end position="969"/>
    </location>
</feature>
<feature type="topological domain" description="Cytoplasmic" evidence="15 27 28 29 30">
    <location>
        <begin position="970"/>
        <end position="975"/>
    </location>
</feature>
<feature type="transmembrane region" description="Helical; Name=2" evidence="15 27 28 29 30">
    <location>
        <begin position="976"/>
        <end position="999"/>
    </location>
</feature>
<feature type="topological domain" description="Extracellular" evidence="15 27 28 29 30">
    <location>
        <begin position="1000"/>
        <end position="1006"/>
    </location>
</feature>
<feature type="transmembrane region" description="Helical; Name=3" evidence="15 27 28 29 30">
    <location>
        <begin position="1007"/>
        <end position="1034"/>
    </location>
</feature>
<feature type="topological domain" description="Cytoplasmic" evidence="15 27 28 29 30">
    <location>
        <begin position="1035"/>
        <end position="1048"/>
    </location>
</feature>
<feature type="transmembrane region" description="Helical; Name=4" evidence="15 27 28 29 30">
    <location>
        <begin position="1049"/>
        <end position="1071"/>
    </location>
</feature>
<feature type="topological domain" description="Extracellular" evidence="15 27 28 29 30">
    <location>
        <begin position="1072"/>
        <end position="1086"/>
    </location>
</feature>
<feature type="transmembrane region" description="Helical; Name=5" evidence="15 27 28 29 30">
    <location>
        <begin position="1087"/>
        <end position="1112"/>
    </location>
</feature>
<feature type="topological domain" description="Cytoplasmic" evidence="15 27 28 29 30">
    <location>
        <begin position="1113"/>
        <end position="1142"/>
    </location>
</feature>
<feature type="transmembrane region" description="Helical; Name=6" evidence="15 27 28 29 30">
    <location>
        <begin position="1143"/>
        <end position="1163"/>
    </location>
</feature>
<feature type="topological domain" description="Extracellular" evidence="15 27 28 29 30">
    <location>
        <begin position="1164"/>
        <end position="1168"/>
    </location>
</feature>
<feature type="transmembrane region" description="Helical; Name=7" evidence="15 27 28 29 30">
    <location>
        <begin position="1169"/>
        <end position="1195"/>
    </location>
</feature>
<feature type="topological domain" description="Cytoplasmic" evidence="15 27 28 29 30">
    <location>
        <begin position="1196"/>
        <end position="1537"/>
    </location>
</feature>
<feature type="domain" description="SUEL-type lectin" evidence="4">
    <location>
        <begin position="103"/>
        <end position="192"/>
    </location>
</feature>
<feature type="domain" description="Olfactomedin-like" evidence="5">
    <location>
        <begin position="202"/>
        <end position="461"/>
    </location>
</feature>
<feature type="domain" description="GAIN-B" evidence="3">
    <location>
        <begin position="756"/>
        <end position="935"/>
    </location>
</feature>
<feature type="region of interest" description="Disordered" evidence="6">
    <location>
        <begin position="53"/>
        <end position="80"/>
    </location>
</feature>
<feature type="region of interest" description="Interaction with FLRT3">
    <location>
        <begin position="317"/>
        <end position="347"/>
    </location>
</feature>
<feature type="region of interest" description="Disordered" evidence="6">
    <location>
        <begin position="521"/>
        <end position="540"/>
    </location>
</feature>
<feature type="region of interest" description="GPS" evidence="3">
    <location>
        <begin position="886"/>
        <end position="935"/>
    </location>
</feature>
<feature type="region of interest" description="Stachel" evidence="1">
    <location>
        <begin position="923"/>
        <end position="939"/>
    </location>
</feature>
<feature type="region of interest" description="Disordered" evidence="6">
    <location>
        <begin position="1213"/>
        <end position="1237"/>
    </location>
</feature>
<feature type="region of interest" description="Disordered" evidence="6">
    <location>
        <begin position="1512"/>
        <end position="1537"/>
    </location>
</feature>
<feature type="short sequence motif" description="PDZ-binding" evidence="16">
    <location>
        <begin position="1532"/>
        <end position="1537"/>
    </location>
</feature>
<feature type="binding site" evidence="10">
    <location>
        <position position="332"/>
    </location>
    <ligand>
        <name>Ca(2+)</name>
        <dbReference type="ChEBI" id="CHEBI:29108"/>
    </ligand>
</feature>
<feature type="binding site" evidence="10">
    <location>
        <position position="380"/>
    </location>
    <ligand>
        <name>Ca(2+)</name>
        <dbReference type="ChEBI" id="CHEBI:29108"/>
    </ligand>
</feature>
<feature type="binding site" evidence="10">
    <location>
        <position position="381"/>
    </location>
    <ligand>
        <name>Ca(2+)</name>
        <dbReference type="ChEBI" id="CHEBI:29108"/>
    </ligand>
</feature>
<feature type="binding site" evidence="10">
    <location>
        <position position="435"/>
    </location>
    <ligand>
        <name>Ca(2+)</name>
        <dbReference type="ChEBI" id="CHEBI:29108"/>
    </ligand>
</feature>
<feature type="site" description="Cleavage; by autolysis" evidence="3 14 24">
    <location>
        <begin position="922"/>
        <end position="923"/>
    </location>
</feature>
<feature type="modified residue" description="Phosphoserine" evidence="31">
    <location>
        <position position="1254"/>
    </location>
</feature>
<feature type="modified residue" description="Phosphoserine" evidence="31">
    <location>
        <position position="1522"/>
    </location>
</feature>
<feature type="glycosylation site" description="N-linked (GlcNAc...) asparagine" evidence="2 10 26">
    <location>
        <position position="161"/>
    </location>
</feature>
<feature type="glycosylation site" description="N-linked (GlcNAc...) asparagine" evidence="2">
    <location>
        <position position="532"/>
    </location>
</feature>
<feature type="glycosylation site" description="N-linked (GlcNAc...) asparagine" evidence="2">
    <location>
        <position position="617"/>
    </location>
</feature>
<feature type="glycosylation site" description="N-linked (GlcNAc...) asparagine" evidence="2">
    <location>
        <position position="827"/>
    </location>
</feature>
<feature type="glycosylation site" description="N-linked (GlcNAc...) asparagine" evidence="2">
    <location>
        <position position="840"/>
    </location>
</feature>
<feature type="glycosylation site" description="N-linked (GlcNAc...) asparagine" evidence="2">
    <location>
        <position position="885"/>
    </location>
</feature>
<feature type="glycosylation site" description="N-linked (GlcNAc...) asparagine" evidence="2">
    <location>
        <position position="911"/>
    </location>
</feature>
<feature type="glycosylation site" description="N-linked (GlcNAc...) asparagine" evidence="2">
    <location>
        <position position="1000"/>
    </location>
</feature>
<feature type="glycosylation site" description="N-linked (GlcNAc...) asparagine" evidence="2">
    <location>
        <position position="1166"/>
    </location>
</feature>
<feature type="disulfide bond" evidence="26">
    <location>
        <begin position="104"/>
        <end position="134"/>
    </location>
</feature>
<feature type="disulfide bond" evidence="26">
    <location>
        <begin position="113"/>
        <end position="191"/>
    </location>
</feature>
<feature type="disulfide bond" evidence="26">
    <location>
        <begin position="146"/>
        <end position="178"/>
    </location>
</feature>
<feature type="disulfide bond" evidence="26">
    <location>
        <begin position="159"/>
        <end position="165"/>
    </location>
</feature>
<feature type="disulfide bond" evidence="5 26">
    <location>
        <begin position="203"/>
        <end position="385"/>
    </location>
</feature>
<feature type="disulfide bond" evidence="3">
    <location>
        <begin position="886"/>
        <end position="917"/>
    </location>
</feature>
<feature type="disulfide bond" evidence="3">
    <location>
        <begin position="905"/>
        <end position="919"/>
    </location>
</feature>
<feature type="disulfide bond" evidence="15 27 28 29 30">
    <location>
        <begin position="1008"/>
        <end position="1080"/>
    </location>
</feature>
<feature type="splice variant" id="VSP_022138" description="In isoform 4." evidence="19">
    <location>
        <begin position="1"/>
        <end position="239"/>
    </location>
</feature>
<feature type="splice variant" id="VSP_022139" description="In isoform 6." evidence="18">
    <original>KVEQKV</original>
    <variation>I</variation>
    <location>
        <begin position="195"/>
        <end position="200"/>
    </location>
</feature>
<feature type="splice variant" id="VSP_022140" description="In isoform 6." evidence="18">
    <original>H</original>
    <variation>Q</variation>
    <location>
        <position position="650"/>
    </location>
</feature>
<feature type="splice variant" id="VSP_022141" description="In isoform 6." evidence="18">
    <location>
        <begin position="651"/>
        <end position="1537"/>
    </location>
</feature>
<feature type="splice variant" id="VSP_010121" description="In isoform 2 and isoform 5." evidence="18 19">
    <location>
        <begin position="1132"/>
        <end position="1140"/>
    </location>
</feature>
<feature type="splice variant" id="VSP_010122" description="In isoform 2." evidence="18">
    <original>EGLLNNARDTSVMDTLPLNGNHGNSYSIAGGEYLSNCVQIIDRGYNHNETALEKKILKELTSNYIPSYLNNHERSSEQNR</original>
    <variation>GAMANHLISNALLRPHGTNNPYNTLLGEPAVCNNPSISMYNTQEPYRETSMGVKLNIAYQIGASEQCQGYKCHGYSTTEW</variation>
    <location>
        <begin position="1272"/>
        <end position="1351"/>
    </location>
</feature>
<feature type="splice variant" id="VSP_062563" description="In isoform 7.">
    <original>EGLLNNARDTSVMDTLPLNGNHGNSYSIAGGEYLSNCVQIIDRGYNHNETALEKKILKELTSNYIPSYLNNHERSSEQNR</original>
    <variation>PPEVHRADPSRNRTQDLWT</variation>
    <location>
        <begin position="1272"/>
        <end position="1351"/>
    </location>
</feature>
<feature type="splice variant" id="VSP_022142" description="In isoform 3." evidence="18">
    <original>E</original>
    <variation>EPYRETK</variation>
    <location>
        <position position="1272"/>
    </location>
</feature>
<feature type="splice variant" id="VSP_010123" description="In isoform 2 and isoform 7." evidence="18">
    <location>
        <begin position="1352"/>
        <end position="1537"/>
    </location>
</feature>
<feature type="mutagenesis site" description="Strongly reduces FLRT2 binding; when associated with T-246." evidence="10">
    <original>P</original>
    <variation>N</variation>
    <location>
        <position position="244"/>
    </location>
</feature>
<feature type="mutagenesis site" description="Strongly reduces FLRT2 binding; when associated with N-244." evidence="10">
    <original>R</original>
    <variation>T</variation>
    <location>
        <position position="246"/>
    </location>
</feature>
<feature type="mutagenesis site" description="Strongly reduces FLRT2 binding; when associated with T-269." evidence="10">
    <original>T</original>
    <variation>N</variation>
    <location>
        <position position="267"/>
    </location>
</feature>
<feature type="mutagenesis site" description="Strongly reduces FLRT2 binding; when associated with N-267." evidence="10">
    <original>K</original>
    <variation>T</variation>
    <location>
        <position position="269"/>
    </location>
</feature>
<feature type="mutagenesis site" description="Abolishes interaction with FLRT2; when associated with T-294." evidence="10">
    <original>R</original>
    <variation>N</variation>
    <location>
        <position position="292"/>
    </location>
</feature>
<feature type="mutagenesis site" description="Abolishes interaction with FLRT2; when associated with N-292." evidence="10">
    <original>R</original>
    <variation>T</variation>
    <location>
        <position position="294"/>
    </location>
</feature>
<feature type="mutagenesis site" description="In 4A mutant; abolished binding to FLRT proteins; when associated with A-376." evidence="12">
    <original>YHDT</original>
    <variation>AHAA</variation>
    <location>
        <begin position="317"/>
        <end position="320"/>
    </location>
</feature>
<feature type="mutagenesis site" description="Abolishes FLRT3 binding." evidence="11">
    <original>Y</original>
    <variation>A</variation>
    <location>
        <position position="323"/>
    </location>
</feature>
<feature type="mutagenesis site" description="Abolishes interaction with FLRT2; when associated with T-326." evidence="10">
    <original>R</original>
    <variation>N</variation>
    <location>
        <position position="324"/>
    </location>
</feature>
<feature type="mutagenesis site" description="Abolishes interaction with FLRT2; when associated with N-324." evidence="10">
    <original>G</original>
    <variation>T</variation>
    <location>
        <position position="326"/>
    </location>
</feature>
<feature type="mutagenesis site" description="Strongly reduces FLRT3 binding." evidence="11">
    <original>D</original>
    <variation>A</variation>
    <location>
        <position position="332"/>
    </location>
</feature>
<feature type="mutagenesis site" description="In 4A mutant; abolished binding to FLRT proteins; when associated with 317-A--A-321." evidence="12">
    <original>R</original>
    <variation>A</variation>
    <location>
        <position position="376"/>
    </location>
</feature>
<feature type="mutagenesis site" description="Abolished autocatalytic processing, leading to impaired G protein-coupled activity." evidence="12 14">
    <original>T</original>
    <variation>A</variation>
    <variation>G</variation>
    <location>
        <position position="923"/>
    </location>
</feature>
<feature type="mutagenesis site" description="Does not affect G-protein coupled receptor signaling." evidence="15">
    <original>T</original>
    <variation>Y</variation>
    <location>
        <position position="923"/>
    </location>
</feature>
<feature type="mutagenesis site" description="Abolished autocatalytic processing, leading to abolished G-protein coupled receptor signaling." evidence="14 15">
    <original>F</original>
    <variation>A</variation>
    <variation>G</variation>
    <location>
        <position position="925"/>
    </location>
</feature>
<feature type="mutagenesis site" description="Abolished G-protein coupled receptor signaling." evidence="15">
    <original>A</original>
    <variation>T</variation>
    <location>
        <position position="926"/>
    </location>
</feature>
<feature type="mutagenesis site" description="Does not affect G-protein coupled receptor signaling." evidence="15">
    <original>A</original>
    <variation>V</variation>
    <location>
        <position position="926"/>
    </location>
</feature>
<feature type="mutagenesis site" description="Does not affect G-protein coupled receptor signaling." evidence="15">
    <original>V</original>
    <variation>I</variation>
    <location>
        <position position="927"/>
    </location>
</feature>
<feature type="mutagenesis site" description="Strongly decreased G-protein coupled receptor signaling." evidence="15">
    <original>V</original>
    <variation>T</variation>
    <location>
        <position position="927"/>
    </location>
</feature>
<feature type="mutagenesis site" description="Abolished G protein-coupled activity without affecting autocatalytic processing." evidence="14">
    <original>LM</original>
    <variation>AA</variation>
    <location>
        <begin position="928"/>
        <end position="929"/>
    </location>
</feature>
<feature type="mutagenesis site" description="Abolished G-protein coupled receptor signaling." evidence="15">
    <original>L</original>
    <variation>A</variation>
    <location>
        <position position="928"/>
    </location>
</feature>
<feature type="mutagenesis site" description="Abolished G-protein coupled receptor signaling." evidence="15">
    <original>M</original>
    <variation>A</variation>
    <location>
        <position position="929"/>
    </location>
</feature>
<feature type="mutagenesis site" description="Does not affect G-protein coupled receptor signaling." evidence="15">
    <location>
        <position position="930"/>
    </location>
</feature>
<feature type="mutagenesis site" description="Does not affect G-protein coupled receptor signaling." evidence="15">
    <original>H</original>
    <variation>A</variation>
    <location>
        <position position="931"/>
    </location>
</feature>
<feature type="mutagenesis site" description="Decreased G-protein coupled receptor signaling." evidence="15">
    <original>L</original>
    <variation>A</variation>
    <location>
        <position position="945"/>
    </location>
</feature>
<feature type="mutagenesis site" description="Decreased G-protein coupled receptor signaling." evidence="15">
    <original>D</original>
    <variation>A</variation>
    <location>
        <position position="946"/>
    </location>
</feature>
<feature type="mutagenesis site" description="Decreased G-protein coupled receptor signaling." evidence="15">
    <original>I</original>
    <variation>A</variation>
    <location>
        <position position="953"/>
    </location>
</feature>
<feature type="mutagenesis site" description="Strongly decreased G-protein coupled receptor signaling." evidence="15">
    <original>F</original>
    <variation>A</variation>
    <location>
        <position position="995"/>
    </location>
</feature>
<feature type="mutagenesis site" description="Decreased G-protein coupled receptor signaling." evidence="15">
    <original>N</original>
    <variation>A</variation>
    <location>
        <position position="1000"/>
    </location>
</feature>
<feature type="mutagenesis site" description="Strongly decreased G-protein coupled receptor signaling." evidence="15">
    <original>F</original>
    <variation>A</variation>
    <location>
        <position position="1019"/>
    </location>
</feature>
<feature type="mutagenesis site" description="Strongly decreased G-protein coupled receptor signaling." evidence="15">
    <original>F</original>
    <variation>A</variation>
    <location>
        <position position="1023"/>
    </location>
</feature>
<feature type="mutagenesis site" description="Strongly decreased G-protein coupled receptor signaling." evidence="15">
    <original>F</original>
    <variation>A</variation>
    <location>
        <position position="1041"/>
    </location>
</feature>
<feature type="mutagenesis site" description="Strongly decreased G-protein coupled receptor signaling." evidence="15">
    <original>W</original>
    <variation>F</variation>
    <location>
        <position position="1081"/>
    </location>
</feature>
<feature type="mutagenesis site" description="Strongly decreased G-protein coupled receptor signaling." evidence="15">
    <original>W</original>
    <variation>A</variation>
    <location>
        <position position="1090"/>
    </location>
</feature>
<feature type="mutagenesis site" description="Strongly decreased G-protein coupled receptor signaling." evidence="15">
    <original>F</original>
    <variation>A</variation>
    <location>
        <position position="1092"/>
    </location>
</feature>
<feature type="mutagenesis site" description="Abolished G-protein coupled receptor signaling." evidence="15">
    <original>G</original>
    <variation>F</variation>
    <variation>I</variation>
    <variation>T</variation>
    <variation>S</variation>
    <variation>A</variation>
    <location>
        <position position="1155"/>
    </location>
</feature>
<feature type="mutagenesis site" description="Decreased but not abolished G-protein coupled receptor signaling." evidence="15">
    <original>G</original>
    <variation>P</variation>
    <location>
        <position position="1155"/>
    </location>
</feature>
<feature type="mutagenesis site" description="Strongly decreased G-protein coupled receptor signaling." evidence="15">
    <original>W</original>
    <variation>A</variation>
    <location>
        <position position="1158"/>
    </location>
</feature>
<feature type="mutagenesis site" description="Decreased G-protein coupled receptor signaling." evidence="15">
    <original>L</original>
    <variation>A</variation>
    <location>
        <position position="1162"/>
    </location>
</feature>
<feature type="mutagenesis site" description="Strongly decreased G-protein coupled receptor signaling." evidence="15">
    <original>F</original>
    <variation>A</variation>
    <location>
        <position position="1176"/>
    </location>
</feature>
<feature type="mutagenesis site" description="Decreased G-protein coupled receptor signaling." evidence="15">
    <original>N</original>
    <variation>A</variation>
    <location>
        <position position="1180"/>
    </location>
</feature>
<feature type="sequence conflict" description="In Ref. 2; AAH94668." evidence="23" ref="2">
    <original>A</original>
    <variation>S</variation>
    <location>
        <position position="381"/>
    </location>
</feature>
<feature type="sequence conflict" description="In Ref. 1; BAE27870." evidence="23" ref="1">
    <original>K</original>
    <variation>R</variation>
    <location>
        <position position="1252"/>
    </location>
</feature>
<feature type="sequence conflict" description="In Ref. 1; BAE26219." evidence="23" ref="1">
    <original>A</original>
    <variation>T</variation>
    <location>
        <position position="1375"/>
    </location>
</feature>
<feature type="sequence conflict" description="In Ref. 1; BAE26219." evidence="23" ref="1">
    <original>V</original>
    <variation>M</variation>
    <location>
        <position position="1495"/>
    </location>
</feature>
<feature type="strand" evidence="34">
    <location>
        <begin position="101"/>
        <end position="104"/>
    </location>
</feature>
<feature type="strand" evidence="34">
    <location>
        <begin position="108"/>
        <end position="112"/>
    </location>
</feature>
<feature type="strand" evidence="34">
    <location>
        <begin position="118"/>
        <end position="129"/>
    </location>
</feature>
<feature type="strand" evidence="34">
    <location>
        <begin position="131"/>
        <end position="134"/>
    </location>
</feature>
<feature type="turn" evidence="34">
    <location>
        <begin position="138"/>
        <end position="141"/>
    </location>
</feature>
<feature type="helix" evidence="34">
    <location>
        <begin position="151"/>
        <end position="158"/>
    </location>
</feature>
<feature type="turn" evidence="34">
    <location>
        <begin position="159"/>
        <end position="161"/>
    </location>
</feature>
<feature type="strand" evidence="34">
    <location>
        <begin position="163"/>
        <end position="168"/>
    </location>
</feature>
<feature type="turn" evidence="34">
    <location>
        <begin position="171"/>
        <end position="173"/>
    </location>
</feature>
<feature type="strand" evidence="34">
    <location>
        <begin position="184"/>
        <end position="192"/>
    </location>
</feature>
<feature type="strand" evidence="34">
    <location>
        <begin position="199"/>
        <end position="202"/>
    </location>
</feature>
<feature type="strand" evidence="33">
    <location>
        <begin position="206"/>
        <end position="218"/>
    </location>
</feature>
<feature type="strand" evidence="33">
    <location>
        <begin position="220"/>
        <end position="227"/>
    </location>
</feature>
<feature type="strand" evidence="34">
    <location>
        <begin position="230"/>
        <end position="232"/>
    </location>
</feature>
<feature type="strand" evidence="33">
    <location>
        <begin position="237"/>
        <end position="241"/>
    </location>
</feature>
<feature type="turn" evidence="35">
    <location>
        <begin position="244"/>
        <end position="246"/>
    </location>
</feature>
<feature type="strand" evidence="33">
    <location>
        <begin position="249"/>
        <end position="255"/>
    </location>
</feature>
<feature type="helix" evidence="33">
    <location>
        <begin position="256"/>
        <end position="261"/>
    </location>
</feature>
<feature type="strand" evidence="33">
    <location>
        <begin position="265"/>
        <end position="269"/>
    </location>
</feature>
<feature type="strand" evidence="33">
    <location>
        <begin position="274"/>
        <end position="277"/>
    </location>
</feature>
<feature type="strand" evidence="33">
    <location>
        <begin position="280"/>
        <end position="282"/>
    </location>
</feature>
<feature type="strand" evidence="33">
    <location>
        <begin position="285"/>
        <end position="290"/>
    </location>
</feature>
<feature type="strand" evidence="33">
    <location>
        <begin position="293"/>
        <end position="300"/>
    </location>
</feature>
<feature type="turn" evidence="33">
    <location>
        <begin position="301"/>
        <end position="304"/>
    </location>
</feature>
<feature type="strand" evidence="33">
    <location>
        <begin position="305"/>
        <end position="311"/>
    </location>
</feature>
<feature type="strand" evidence="32">
    <location>
        <begin position="318"/>
        <end position="321"/>
    </location>
</feature>
<feature type="strand" evidence="33">
    <location>
        <begin position="330"/>
        <end position="336"/>
    </location>
</feature>
<feature type="strand" evidence="33">
    <location>
        <begin position="339"/>
        <end position="346"/>
    </location>
</feature>
<feature type="turn" evidence="33">
    <location>
        <begin position="347"/>
        <end position="351"/>
    </location>
</feature>
<feature type="strand" evidence="33">
    <location>
        <begin position="352"/>
        <end position="358"/>
    </location>
</feature>
<feature type="turn" evidence="33">
    <location>
        <begin position="360"/>
        <end position="362"/>
    </location>
</feature>
<feature type="strand" evidence="33">
    <location>
        <begin position="365"/>
        <end position="374"/>
    </location>
</feature>
<feature type="helix" evidence="33">
    <location>
        <begin position="375"/>
        <end position="377"/>
    </location>
</feature>
<feature type="strand" evidence="33">
    <location>
        <begin position="378"/>
        <end position="384"/>
    </location>
</feature>
<feature type="strand" evidence="33">
    <location>
        <begin position="387"/>
        <end position="393"/>
    </location>
</feature>
<feature type="strand" evidence="33">
    <location>
        <begin position="405"/>
        <end position="412"/>
    </location>
</feature>
<feature type="turn" evidence="33">
    <location>
        <begin position="413"/>
        <end position="416"/>
    </location>
</feature>
<feature type="strand" evidence="33">
    <location>
        <begin position="417"/>
        <end position="424"/>
    </location>
</feature>
<feature type="strand" evidence="35">
    <location>
        <begin position="428"/>
        <end position="430"/>
    </location>
</feature>
<feature type="strand" evidence="33">
    <location>
        <begin position="434"/>
        <end position="438"/>
    </location>
</feature>
<feature type="turn" evidence="33">
    <location>
        <begin position="439"/>
        <end position="442"/>
    </location>
</feature>
<feature type="strand" evidence="33">
    <location>
        <begin position="443"/>
        <end position="448"/>
    </location>
</feature>
<feature type="strand" evidence="33">
    <location>
        <begin position="451"/>
        <end position="460"/>
    </location>
</feature>
<feature type="turn" evidence="36">
    <location>
        <begin position="926"/>
        <end position="929"/>
    </location>
</feature>
<feature type="strand" evidence="37">
    <location>
        <begin position="938"/>
        <end position="940"/>
    </location>
</feature>
<feature type="helix" evidence="36">
    <location>
        <begin position="941"/>
        <end position="955"/>
    </location>
</feature>
<feature type="turn" evidence="36">
    <location>
        <begin position="956"/>
        <end position="958"/>
    </location>
</feature>
<feature type="helix" evidence="36">
    <location>
        <begin position="959"/>
        <end position="969"/>
    </location>
</feature>
<feature type="helix" evidence="36">
    <location>
        <begin position="971"/>
        <end position="973"/>
    </location>
</feature>
<feature type="helix" evidence="36">
    <location>
        <begin position="976"/>
        <end position="998"/>
    </location>
</feature>
<feature type="turn" evidence="36">
    <location>
        <begin position="1005"/>
        <end position="1007"/>
    </location>
</feature>
<feature type="strand" evidence="38">
    <location>
        <begin position="1008"/>
        <end position="1010"/>
    </location>
</feature>
<feature type="helix" evidence="36">
    <location>
        <begin position="1011"/>
        <end position="1034"/>
    </location>
</feature>
<feature type="turn" evidence="36">
    <location>
        <begin position="1035"/>
        <end position="1037"/>
    </location>
</feature>
<feature type="helix" evidence="36">
    <location>
        <begin position="1048"/>
        <end position="1055"/>
    </location>
</feature>
<feature type="helix" evidence="36">
    <location>
        <begin position="1057"/>
        <end position="1069"/>
    </location>
</feature>
<feature type="strand" evidence="36">
    <location>
        <begin position="1077"/>
        <end position="1082"/>
    </location>
</feature>
<feature type="strand" evidence="36">
    <location>
        <begin position="1084"/>
        <end position="1086"/>
    </location>
</feature>
<feature type="helix" evidence="36">
    <location>
        <begin position="1087"/>
        <end position="1089"/>
    </location>
</feature>
<feature type="helix" evidence="36">
    <location>
        <begin position="1090"/>
        <end position="1117"/>
    </location>
</feature>
<feature type="helix" evidence="36">
    <location>
        <begin position="1144"/>
        <end position="1153"/>
    </location>
</feature>
<feature type="helix" evidence="36">
    <location>
        <begin position="1156"/>
        <end position="1162"/>
    </location>
</feature>
<feature type="strand" evidence="36">
    <location>
        <begin position="1166"/>
        <end position="1168"/>
    </location>
</feature>
<feature type="helix" evidence="36">
    <location>
        <begin position="1170"/>
        <end position="1180"/>
    </location>
</feature>
<feature type="helix" evidence="36">
    <location>
        <begin position="1183"/>
        <end position="1192"/>
    </location>
</feature>
<feature type="helix" evidence="36">
    <location>
        <begin position="1196"/>
        <end position="1206"/>
    </location>
</feature>
<proteinExistence type="evidence at protein level"/>
<protein>
    <recommendedName>
        <fullName evidence="23">Adhesion G protein-coupled receptor L3</fullName>
    </recommendedName>
    <alternativeName>
        <fullName evidence="20">Latrophilin-3</fullName>
    </alternativeName>
    <alternativeName>
        <fullName evidence="25">Lectomedin-3</fullName>
    </alternativeName>
</protein>
<name>AGRL3_MOUSE</name>
<sequence>MWPPQLLILTMLLAPVVHGGKHNERHPALAAPLRHAERSPGGALPPRHLLQQPAAERSTAHRGQGPRGAARGVRGPGAPGAQIAAQAFSRAPIPMAVVRRELSCESYPIELRCPGTDVIMIESANYGRTDDKICDSDPAQMENIRCYLPDAYKIMSQRCNNRTQCAVVAGPDVFPDPCPGTYKYLEVQYECVPYKVEQKVFLCPGLLKGVYQSEHLFESDHQSGAWCKDPLQASDKIYYMPWTPYRTDTLTEYSSKDDFIAGRPTTTYKLPHRVDGTGFVVYDGALFFNKERTRNIVKFDLRTRIKSGEAIIANANYHDTSPYRWGGKSDIDLAVDENGLWVIYATEQNNGKIVISQLNPYTLRIEGTWDTAYDKRSASNAFMICGILYVVKSVYEDDDNEATGNKIDYIYNTDQSKDSLVDVPFPNSYQYIAAVDYNPRDNLLYVWNNYHVVKYSLDFGPLDSRSGPVHHGQVSYISPPIHLDSELERPPVRGISTTGSLGMGSTTTSTTLRTTTWNIGRSTTASLPGRRNRSTSTPSPAVEVLDDVTTHLPSAASQIPAMEESCEAVEAREIMWFKTRQGQVAKQPCPAGTIGVSTYLCLAPDGIWDPQGPDLSNCSSPWVNHITQKLKSGETAANIARELAEQTRNHLNAGDITYSVRAMDQLVGLLDVQLRNLTPGGKDSAARSLNKLQKRERSCRAYVQAMVETVNNLLQPQALNAWRDLTTSDQLRAATMLLDTVEESAFVLADNLLKTDIVRENTDNIQLEVARLSTEGNLEDLKFPENMGHGSTIQLSANTLKQNGRNGEIRVAFVLYNNLGPYLSTENASMKLGTEAMSTNHSVIVNSPVITAAINKEFSNKVYLADPVVFTVKHIKQSEENFNPNCSFWSYSKRTMTGYWSTQGCRLLTTNKTHTTCSCNHLTNFAVLMAHVEVKHSDAVHDLLLDVITWVGILLSLVCLLICIFTFCFFRGLQSDRNTIHKNLCISLFVAELLFLIGINRTDQPIACAVFAALLHFFFLAAFTWMFLEGVQLYIMLVEVFESEHSRRKYFYLVGYGMPALIVAVSAAVDYRSYGTDKVCWLRLDTYFIWSFIGPATLIIMLNVIFLGIALYKMFHHTAILKPESGCLDNINYEDNRPFIKSWVIGAIALLCLLGLTWAFGLMYINESTVIMAYLFTIFNSLQGMFIFIFHCVLQKKVRKEYGKCLRTHCCSGKSTESSIGSGKTSGSRTPGRYSTGSQSRIRRMWNDTVRKQSESSFITGDINSSASLNREGLLNNARDTSVMDTLPLNGNHGNSYSIAGGEYLSNCVQIIDRGYNHNETALEKKILKELTSNYIPSYLNNHERSSEQNRNMMNKLVNNLGSGSEDDAIVLDDAASFNHEESLGLELIHEESDAPLLPPRVYSTDNHQPHHYSRRRFPQDHSESFFPLLTDEHTEDLQSPHRDSLYTSMPALAGVPAADSVTTSTQTEAAAAKGGDAEDVYYKSMPNLGSRNHVHPLHAYYQLGRGSSDGFIVPPNKDGASPEGTSKGPAHLVTSL</sequence>
<keyword id="KW-0002">3D-structure</keyword>
<keyword id="KW-0025">Alternative splicing</keyword>
<keyword id="KW-0106">Calcium</keyword>
<keyword id="KW-0965">Cell junction</keyword>
<keyword id="KW-1003">Cell membrane</keyword>
<keyword id="KW-0966">Cell projection</keyword>
<keyword id="KW-1015">Disulfide bond</keyword>
<keyword id="KW-0297">G-protein coupled receptor</keyword>
<keyword id="KW-0325">Glycoprotein</keyword>
<keyword id="KW-0430">Lectin</keyword>
<keyword id="KW-0472">Membrane</keyword>
<keyword id="KW-0479">Metal-binding</keyword>
<keyword id="KW-0597">Phosphoprotein</keyword>
<keyword id="KW-0628">Postsynaptic cell membrane</keyword>
<keyword id="KW-0675">Receptor</keyword>
<keyword id="KW-1185">Reference proteome</keyword>
<keyword id="KW-0732">Signal</keyword>
<keyword id="KW-0770">Synapse</keyword>
<keyword id="KW-0807">Transducer</keyword>
<keyword id="KW-0812">Transmembrane</keyword>
<keyword id="KW-1133">Transmembrane helix</keyword>
<organism>
    <name type="scientific">Mus musculus</name>
    <name type="common">Mouse</name>
    <dbReference type="NCBI Taxonomy" id="10090"/>
    <lineage>
        <taxon>Eukaryota</taxon>
        <taxon>Metazoa</taxon>
        <taxon>Chordata</taxon>
        <taxon>Craniata</taxon>
        <taxon>Vertebrata</taxon>
        <taxon>Euteleostomi</taxon>
        <taxon>Mammalia</taxon>
        <taxon>Eutheria</taxon>
        <taxon>Euarchontoglires</taxon>
        <taxon>Glires</taxon>
        <taxon>Rodentia</taxon>
        <taxon>Myomorpha</taxon>
        <taxon>Muroidea</taxon>
        <taxon>Muridae</taxon>
        <taxon>Murinae</taxon>
        <taxon>Mus</taxon>
        <taxon>Mus</taxon>
    </lineage>
</organism>
<reference key="1">
    <citation type="journal article" date="2005" name="Science">
        <title>The transcriptional landscape of the mammalian genome.</title>
        <authorList>
            <person name="Carninci P."/>
            <person name="Kasukawa T."/>
            <person name="Katayama S."/>
            <person name="Gough J."/>
            <person name="Frith M.C."/>
            <person name="Maeda N."/>
            <person name="Oyama R."/>
            <person name="Ravasi T."/>
            <person name="Lenhard B."/>
            <person name="Wells C."/>
            <person name="Kodzius R."/>
            <person name="Shimokawa K."/>
            <person name="Bajic V.B."/>
            <person name="Brenner S.E."/>
            <person name="Batalov S."/>
            <person name="Forrest A.R."/>
            <person name="Zavolan M."/>
            <person name="Davis M.J."/>
            <person name="Wilming L.G."/>
            <person name="Aidinis V."/>
            <person name="Allen J.E."/>
            <person name="Ambesi-Impiombato A."/>
            <person name="Apweiler R."/>
            <person name="Aturaliya R.N."/>
            <person name="Bailey T.L."/>
            <person name="Bansal M."/>
            <person name="Baxter L."/>
            <person name="Beisel K.W."/>
            <person name="Bersano T."/>
            <person name="Bono H."/>
            <person name="Chalk A.M."/>
            <person name="Chiu K.P."/>
            <person name="Choudhary V."/>
            <person name="Christoffels A."/>
            <person name="Clutterbuck D.R."/>
            <person name="Crowe M.L."/>
            <person name="Dalla E."/>
            <person name="Dalrymple B.P."/>
            <person name="de Bono B."/>
            <person name="Della Gatta G."/>
            <person name="di Bernardo D."/>
            <person name="Down T."/>
            <person name="Engstrom P."/>
            <person name="Fagiolini M."/>
            <person name="Faulkner G."/>
            <person name="Fletcher C.F."/>
            <person name="Fukushima T."/>
            <person name="Furuno M."/>
            <person name="Futaki S."/>
            <person name="Gariboldi M."/>
            <person name="Georgii-Hemming P."/>
            <person name="Gingeras T.R."/>
            <person name="Gojobori T."/>
            <person name="Green R.E."/>
            <person name="Gustincich S."/>
            <person name="Harbers M."/>
            <person name="Hayashi Y."/>
            <person name="Hensch T.K."/>
            <person name="Hirokawa N."/>
            <person name="Hill D."/>
            <person name="Huminiecki L."/>
            <person name="Iacono M."/>
            <person name="Ikeo K."/>
            <person name="Iwama A."/>
            <person name="Ishikawa T."/>
            <person name="Jakt M."/>
            <person name="Kanapin A."/>
            <person name="Katoh M."/>
            <person name="Kawasawa Y."/>
            <person name="Kelso J."/>
            <person name="Kitamura H."/>
            <person name="Kitano H."/>
            <person name="Kollias G."/>
            <person name="Krishnan S.P."/>
            <person name="Kruger A."/>
            <person name="Kummerfeld S.K."/>
            <person name="Kurochkin I.V."/>
            <person name="Lareau L.F."/>
            <person name="Lazarevic D."/>
            <person name="Lipovich L."/>
            <person name="Liu J."/>
            <person name="Liuni S."/>
            <person name="McWilliam S."/>
            <person name="Madan Babu M."/>
            <person name="Madera M."/>
            <person name="Marchionni L."/>
            <person name="Matsuda H."/>
            <person name="Matsuzawa S."/>
            <person name="Miki H."/>
            <person name="Mignone F."/>
            <person name="Miyake S."/>
            <person name="Morris K."/>
            <person name="Mottagui-Tabar S."/>
            <person name="Mulder N."/>
            <person name="Nakano N."/>
            <person name="Nakauchi H."/>
            <person name="Ng P."/>
            <person name="Nilsson R."/>
            <person name="Nishiguchi S."/>
            <person name="Nishikawa S."/>
            <person name="Nori F."/>
            <person name="Ohara O."/>
            <person name="Okazaki Y."/>
            <person name="Orlando V."/>
            <person name="Pang K.C."/>
            <person name="Pavan W.J."/>
            <person name="Pavesi G."/>
            <person name="Pesole G."/>
            <person name="Petrovsky N."/>
            <person name="Piazza S."/>
            <person name="Reed J."/>
            <person name="Reid J.F."/>
            <person name="Ring B.Z."/>
            <person name="Ringwald M."/>
            <person name="Rost B."/>
            <person name="Ruan Y."/>
            <person name="Salzberg S.L."/>
            <person name="Sandelin A."/>
            <person name="Schneider C."/>
            <person name="Schoenbach C."/>
            <person name="Sekiguchi K."/>
            <person name="Semple C.A."/>
            <person name="Seno S."/>
            <person name="Sessa L."/>
            <person name="Sheng Y."/>
            <person name="Shibata Y."/>
            <person name="Shimada H."/>
            <person name="Shimada K."/>
            <person name="Silva D."/>
            <person name="Sinclair B."/>
            <person name="Sperling S."/>
            <person name="Stupka E."/>
            <person name="Sugiura K."/>
            <person name="Sultana R."/>
            <person name="Takenaka Y."/>
            <person name="Taki K."/>
            <person name="Tammoja K."/>
            <person name="Tan S.L."/>
            <person name="Tang S."/>
            <person name="Taylor M.S."/>
            <person name="Tegner J."/>
            <person name="Teichmann S.A."/>
            <person name="Ueda H.R."/>
            <person name="van Nimwegen E."/>
            <person name="Verardo R."/>
            <person name="Wei C.L."/>
            <person name="Yagi K."/>
            <person name="Yamanishi H."/>
            <person name="Zabarovsky E."/>
            <person name="Zhu S."/>
            <person name="Zimmer A."/>
            <person name="Hide W."/>
            <person name="Bult C."/>
            <person name="Grimmond S.M."/>
            <person name="Teasdale R.D."/>
            <person name="Liu E.T."/>
            <person name="Brusic V."/>
            <person name="Quackenbush J."/>
            <person name="Wahlestedt C."/>
            <person name="Mattick J.S."/>
            <person name="Hume D.A."/>
            <person name="Kai C."/>
            <person name="Sasaki D."/>
            <person name="Tomaru Y."/>
            <person name="Fukuda S."/>
            <person name="Kanamori-Katayama M."/>
            <person name="Suzuki M."/>
            <person name="Aoki J."/>
            <person name="Arakawa T."/>
            <person name="Iida J."/>
            <person name="Imamura K."/>
            <person name="Itoh M."/>
            <person name="Kato T."/>
            <person name="Kawaji H."/>
            <person name="Kawagashira N."/>
            <person name="Kawashima T."/>
            <person name="Kojima M."/>
            <person name="Kondo S."/>
            <person name="Konno H."/>
            <person name="Nakano K."/>
            <person name="Ninomiya N."/>
            <person name="Nishio T."/>
            <person name="Okada M."/>
            <person name="Plessy C."/>
            <person name="Shibata K."/>
            <person name="Shiraki T."/>
            <person name="Suzuki S."/>
            <person name="Tagami M."/>
            <person name="Waki K."/>
            <person name="Watahiki A."/>
            <person name="Okamura-Oho Y."/>
            <person name="Suzuki H."/>
            <person name="Kawai J."/>
            <person name="Hayashizaki Y."/>
        </authorList>
    </citation>
    <scope>NUCLEOTIDE SEQUENCE [LARGE SCALE MRNA] (ISOFORM 4)</scope>
    <scope>NUCLEOTIDE SEQUENCE [LARGE SCALE MRNA] OF 672-1537 (ISOFORM 5)</scope>
    <source>
        <strain>C57BL/6J</strain>
        <tissue>Mammary gland</tissue>
    </source>
</reference>
<reference key="2">
    <citation type="journal article" date="2004" name="Genome Res.">
        <title>The status, quality, and expansion of the NIH full-length cDNA project: the Mammalian Gene Collection (MGC).</title>
        <authorList>
            <consortium name="The MGC Project Team"/>
        </authorList>
    </citation>
    <scope>NUCLEOTIDE SEQUENCE [LARGE SCALE MRNA] (ISOFORMS 2; 3 AND 6)</scope>
    <source>
        <strain>C57BL/6J</strain>
        <tissue>Brain</tissue>
        <tissue>Eye</tissue>
    </source>
</reference>
<reference key="3">
    <citation type="journal article" date="2003" name="DNA Res.">
        <title>Prediction of the coding sequences of mouse homologues of KIAA gene: II. The complete nucleotide sequences of 400 mouse KIAA-homologous cDNAs identified by screening of terminal sequences of cDNA clones randomly sampled from size-fractionated libraries.</title>
        <authorList>
            <person name="Okazaki N."/>
            <person name="Kikuno R."/>
            <person name="Ohara R."/>
            <person name="Inamoto S."/>
            <person name="Aizawa H."/>
            <person name="Yuasa S."/>
            <person name="Nakajima D."/>
            <person name="Nagase T."/>
            <person name="Ohara O."/>
            <person name="Koga H."/>
        </authorList>
    </citation>
    <scope>NUCLEOTIDE SEQUENCE [LARGE SCALE MRNA] OF 481-1537 (ISOFORM 1)</scope>
    <source>
        <tissue>Brain</tissue>
    </source>
</reference>
<reference key="4">
    <citation type="journal article" date="2003" name="Proc. Natl. Acad. Sci. U.S.A.">
        <title>The G protein-coupled receptor repertoires of human and mouse.</title>
        <authorList>
            <person name="Vassilatis D.K."/>
            <person name="Hohmann J.G."/>
            <person name="Zeng H."/>
            <person name="Li F."/>
            <person name="Ranchalis J.E."/>
            <person name="Mortrud M.T."/>
            <person name="Brown A."/>
            <person name="Rodriguez S.S."/>
            <person name="Weller J.R."/>
            <person name="Wright A.C."/>
            <person name="Bergmann J.E."/>
            <person name="Gaitanaris G.A."/>
        </authorList>
    </citation>
    <scope>NUCLEOTIDE SEQUENCE [LARGE SCALE MRNA] OF 803-981</scope>
</reference>
<reference key="5">
    <citation type="journal article" date="2010" name="Cell">
        <title>A tissue-specific atlas of mouse protein phosphorylation and expression.</title>
        <authorList>
            <person name="Huttlin E.L."/>
            <person name="Jedrychowski M.P."/>
            <person name="Elias J.E."/>
            <person name="Goswami T."/>
            <person name="Rad R."/>
            <person name="Beausoleil S.A."/>
            <person name="Villen J."/>
            <person name="Haas W."/>
            <person name="Sowa M.E."/>
            <person name="Gygi S.P."/>
        </authorList>
    </citation>
    <scope>PHOSPHORYLATION [LARGE SCALE ANALYSIS] AT SER-1254 AND SER-1522</scope>
    <scope>IDENTIFICATION BY MASS SPECTROMETRY [LARGE SCALE ANALYSIS]</scope>
    <source>
        <tissue>Brain</tissue>
        <tissue>Lung</tissue>
    </source>
</reference>
<reference key="6">
    <citation type="journal article" date="2012" name="Brain Res.">
        <title>Initial characterization of mice null for Lphn3, a gene implicated in ADHD and addiction.</title>
        <authorList>
            <person name="Wallis D."/>
            <person name="Hill D.S."/>
            <person name="Mendez I.A."/>
            <person name="Abbott L.C."/>
            <person name="Finnell R.H."/>
            <person name="Wellman P.J."/>
            <person name="Setlow B."/>
        </authorList>
    </citation>
    <scope>DISRUPTION PHENOTYPE</scope>
</reference>
<reference key="7">
    <citation type="journal article" date="2012" name="Neuron">
        <title>FLRT proteins are endogenous latrophilin ligands and regulate excitatory synapse development.</title>
        <authorList>
            <person name="O'Sullivan M.L."/>
            <person name="de Wit J."/>
            <person name="Savas J.N."/>
            <person name="Comoletti D."/>
            <person name="Otto-Hitt S."/>
            <person name="Yates J.R. III"/>
            <person name="Ghosh A."/>
        </authorList>
    </citation>
    <scope>INTERACTION WITH TENM3; FLRT1; FLRT2 AND FLRT3</scope>
    <scope>SUBCELLULAR LOCATION</scope>
    <scope>FUNCTION</scope>
</reference>
<reference key="8">
    <citation type="journal article" date="2014" name="Neural Dev.">
        <title>LPHN3, a presynaptic adhesion-GPCR implicated in ADHD, regulates the strength of neocortical layer 2/3 synaptic input to layer 5.</title>
        <authorList>
            <person name="O'Sullivan M.L."/>
            <person name="Martini F."/>
            <person name="von Daake S."/>
            <person name="Comoletti D."/>
            <person name="Ghosh A."/>
        </authorList>
    </citation>
    <scope>FUNCTION</scope>
    <scope>GLYCOSYLATION</scope>
    <scope>INTERACTION WITH FLRT3 AND TENM1</scope>
    <scope>DOMAIN</scope>
    <scope>SUBCELLULAR LOCATION</scope>
</reference>
<reference key="9">
    <citation type="journal article" date="2019" name="Science">
        <title>Latrophilin GPCRs direct synapse specificity by coincident binding of FLRTs and teneurins.</title>
        <authorList>
            <person name="Sando R."/>
            <person name="Jiang X."/>
            <person name="Suedhof T.C."/>
        </authorList>
    </citation>
    <scope>FUNCTION</scope>
    <scope>SUBCELLULAR LOCATION</scope>
    <scope>TISSUE SPECIFICITY</scope>
    <scope>INTERACTION WITH TENM2 AND FLRT3</scope>
    <scope>DISRUPTION PHENOTYPE</scope>
    <scope>MUTAGENESIS OF 317-TYR--THR-320; ARG-376 AND THR-923</scope>
</reference>
<reference key="10">
    <citation type="journal article" date="2020" name="Nat. Chem. Biol.">
        <title>G12/13 is activated by acute tethered agonist exposure in the adhesion GPCR ADGRL3.</title>
        <authorList>
            <person name="Mathiasen S."/>
            <person name="Palmisano T."/>
            <person name="Perry N.A."/>
            <person name="Stoveken H.M."/>
            <person name="Vizurraga A."/>
            <person name="McEwen D.P."/>
            <person name="Okashah N."/>
            <person name="Langenhan T."/>
            <person name="Inoue A."/>
            <person name="Lambert N.A."/>
            <person name="Tall G.G."/>
            <person name="Javitch J.A."/>
        </authorList>
    </citation>
    <scope>FUNCTION</scope>
</reference>
<reference key="11">
    <citation type="journal article" date="2022" name="J. Biol. Chem.">
        <title>Disentangling autoproteolytic cleavage from tethered agonist-dependent activation of the adhesion receptor ADGRL3.</title>
        <authorList>
            <person name="Perry-Hauser N.A."/>
            <person name="VanDyck M.W."/>
            <person name="Lee K.H."/>
            <person name="Shi L."/>
            <person name="Javitch J.A."/>
        </authorList>
    </citation>
    <scope>FUNCTION</scope>
    <scope>SUBCELLULAR LOCATION</scope>
    <scope>PROTEOLYTIC CLEAVAGE</scope>
    <scope>MUTAGENESIS OF THR-923; PHE-925 AND 928-LEU-MET-929</scope>
</reference>
<reference key="12">
    <citation type="journal article" date="2024" name="Nature">
        <title>Alternative splicing of latrophilin-3 controls synapse formation.</title>
        <authorList>
            <person name="Wang S."/>
            <person name="DeLeon C."/>
            <person name="Sun W."/>
            <person name="Quake S.R."/>
            <person name="Roth B.L."/>
            <person name="Suedhof T.C."/>
        </authorList>
    </citation>
    <scope>FUNCTION (ISOFORMS 1 AND 7)</scope>
    <scope>INTERACTION WITH SHANK3 AND DLG4 (ISOFORM 1)</scope>
</reference>
<reference key="13">
    <citation type="journal article" date="2025" name="J. Biol. Chem.">
        <title>N-terminal fragment shedding contributes to signaling of the full-length adhesion receptor ADGRL3.</title>
        <authorList>
            <person name="Perry-Hauser N.A."/>
            <person name="Du Rand J.R."/>
            <person name="Lee K.H."/>
            <person name="Shi L."/>
            <person name="Javitch J.A."/>
        </authorList>
    </citation>
    <scope>FUNCTION</scope>
    <scope>PROTEOLYTIC CLEAVAGE</scope>
</reference>
<reference key="14">
    <citation type="journal article" date="2015" name="Structure">
        <title>Structural basis of latrophilin-FLRT interaction.</title>
        <authorList>
            <person name="Jackson V.A."/>
            <person name="del Toro D."/>
            <person name="Carrasquero M."/>
            <person name="Roversi P."/>
            <person name="Harlos K."/>
            <person name="Klein R."/>
            <person name="Seiradake E."/>
        </authorList>
    </citation>
    <scope>X-RAY CRYSTALLOGRAPHY (2.16 ANGSTROMS) OF 97-459 IN COMPLEX WITH CALCIUM IONS</scope>
    <scope>FUNCTION</scope>
    <scope>INTERACTION WITH FLRT2</scope>
    <scope>DISULFIDE BONDS</scope>
    <scope>GLYCOSYLATION AT ASN-161</scope>
    <scope>MUTAGENESIS OF PRO-244; ARG-246; THR-267; LYS-269; ARG-292; ARG-294; ARG-324 AND GLY-326</scope>
</reference>
<reference key="15">
    <citation type="journal article" date="2015" name="Structure">
        <title>Structural and mechanistic insights into the latrophilin3-FLRT3 complex that mediates glutamatergic synapse development.</title>
        <authorList>
            <person name="Ranaivoson F.M."/>
            <person name="Liu Q."/>
            <person name="Martini F."/>
            <person name="Bergami F."/>
            <person name="von Daake S."/>
            <person name="Li S."/>
            <person name="Lee D."/>
            <person name="Demeler B."/>
            <person name="Hendrickson W.A."/>
            <person name="Comoletti D."/>
        </authorList>
    </citation>
    <scope>X-RAY CRYSTALLOGRAPHY (1.60 ANGSTROMS) OF 199-495 IN COMPLEX WITH FLRT3 AND CALCIUM IONS</scope>
    <scope>FUNCTION</scope>
    <scope>INTERACTION WITH FLRT3</scope>
    <scope>MUTAGENESIS OF TYR-323 AND ASP-332</scope>
</reference>
<reference evidence="27 28 29 30" key="16">
    <citation type="journal article" date="2022" name="Mol. Cell">
        <title>Structural insights into adhesion GPCR ADGRL3 activation and Gq, Gs, Gi, and G12 coupling.</title>
        <authorList>
            <person name="Qian Y."/>
            <person name="Ma Z."/>
            <person name="Liu C."/>
            <person name="Li X."/>
            <person name="Zhu X."/>
            <person name="Wang N."/>
            <person name="Xu Z."/>
            <person name="Xia R."/>
            <person name="Liang J."/>
            <person name="Duan Y."/>
            <person name="Yin H."/>
            <person name="Xiong Y."/>
            <person name="Zhang A."/>
            <person name="Guo C."/>
            <person name="Chen Z."/>
            <person name="Huang Z."/>
            <person name="He Y."/>
        </authorList>
    </citation>
    <scope>STRUCTURE BY ELECTRON MICROSCOPY (2.83 ANGSTROMS) IN COMPLEX WITH GNAI1; GNB1 AND GNG2</scope>
    <scope>FUNCTION</scope>
    <scope>MUTAGENESIS OF THR-923; PHE-925; ALA-926; VAL-927; LEU-928; MET-929; ALA-930; HIS-931; LEU-945; ASP-946; ILE-953; PHE-995; ASN-1000; PHE-1019; PHE-1023; PHE-1041; TRP-1081; TRP-1090; PHE-1092; GLY-1155; TRP-1158; LEU-1162; PHE-1176 AND ASN-1180</scope>
</reference>
<comment type="function">
    <text evidence="7 9 10 11 12 13 14 15 16 17">Orphan adhesion G-protein coupled receptor (aGPCR), which mediates synapse specificity (PubMed:36244455, PubMed:38233523). Ligand binding causes a conformation change that triggers signaling via guanine nucleotide-binding proteins (G proteins) and modulates the activity of downstream effectors (PubMed:36244455, PubMed:36309016). ADGRL3 is coupled with different classes of G alpha proteins, such as G(12)/G(13), G(s), G(i) or G(q), depending on the context (PubMed:32778842, PubMed:36309016, PubMed:39798870). Coupling to G(12)/G(13) G proteins, which mediates the activation Rho small GTPases is the most efficient (PubMed:32778842, PubMed:36244455). Following G-protein coupled receptor activation, associates with cell adhesion molecules that are expressed at the surface of adjacent cells to direct synapse specificity (PubMed:22405201, PubMed:25728924, PubMed:26235031, PubMed:30792275, PubMed:39798870). Specifically mediates the establishment of Schaffer-collateral synapses formed by CA3-region axons on CA1-region pyramidal neurons in the hippocampus (PubMed:30792275). Localizes to postsynaptic spines in excitatory synapses in the S.oriens and S.radiatum and interacts with presynaptic cell adhesion molecules FLRT3 and TENM2, promoting synapse formation (PubMed:30792275). Plays a role in the development of glutamatergic synapses in the cortex (PubMed:22405201, PubMed:24739570). Important in determining the connectivity rates between the principal neurons in the cortex (PubMed:24739570).</text>
</comment>
<comment type="function">
    <molecule>Isoform 1</molecule>
    <text evidence="16">Orphan adhesion G-protein coupled receptor (aGPCR), which mediates synapse specificity (PubMed:38233523). Ligand binding causes a conformation change that triggers signaling via guanine nucleotide-binding proteins (G proteins) and modulates the activity of downstream effectors, such as adenylate cyclase (PubMed:38233523). Isoform 1 is specifically coupled to G(s) G proteins and mediates activation of adenylate cyclase activity (PubMed:38233523). Following G-protein coupled receptor activation, undergoes liquid-liquid phase transition, associates with (1) cell adhesion molecules that are expressed at the surface of adjacent cells, as well as (2) PDZ-containing proteins, such as SHANK3 and DLG4, in the cytoplasm to direct synapse formation (PubMed:38233523).</text>
</comment>
<comment type="function">
    <molecule>Isoform 7</molecule>
    <text evidence="16">Orphan adhesion G-protein coupled receptor (aGPCR) (PubMed:38233523). Ligand binding causes a conformation change that triggers signaling via guanine nucleotide-binding proteins (G proteins) and modulates the activity of downstream effectors, such as RhoA pathway (PubMed:38233523). Isoform 7 is coupled to G(12) and/or G(13) G proteins (GNA12 and GNA13, respectively) and mediates the activation Rho small GTPases (PubMed:38233523).</text>
</comment>
<comment type="activity regulation">
    <text evidence="1 14 17">Forms a heterodimer of 2 chains generated by proteolytic processing that remain associated through non-covalent interactions mediated by the GAIN-B domain (PubMed:36244455, PubMed:39798870). In the inactivated receptor, the Stachel sequence (also named stalk) is embedded in the GAIN-B domain, where it adopts a beta-strand conformation (By similarity). On activation, the Stachel moves into the 7 transmembrane region and adopts a twisted hook-shaped configuration that forms contacts within the receptor, leading to coupling of a G-alpha protein, which activates signaling (By similarity). The cleaved GAIN-B and N-terminal domains can then dissociate from the rest of the receptor (By similarity).</text>
</comment>
<comment type="subunit">
    <text evidence="1 3 7 9 10 11 12">Heterodimer of 2 chains generated by proteolytic processing; the large extracellular N-terminal fragment and the membrane-bound C-terminal fragment predominantly remain associated and non-covalently linked (By similarity). Interacts (via olfactomedin-like domain) with FLRT1 (via extracellular domain) (PubMed:22405201). Interacts (via olfactomedin-like domain) with FLRT2 (via extracellular domain) (PubMed:22405201, PubMed:25728924). Interacts (via olfactomedin-like domain) with FLRT3 (via extracellular domain); the interaction is direct (PubMed:22405201, PubMed:24739570, PubMed:26235031, PubMed:30792275). Interacts (via extracellular domain) with TENM1 (PubMed:24739570). Interacts (via extracellular domain) with TENM2 (PubMed:30792275). Interacts (via extracellular domain) with TENM3 (PubMed:22405201). Identified in a complex with FLRT3 and UNC5B; does not interact with UNC5B by itself. Identified in a complex with FLRT3 and UNC5D; does not interact with UNC5D by itself (By similarity).</text>
</comment>
<comment type="subunit">
    <molecule>Isoform 1</molecule>
    <text evidence="16">Interacts (via PDZ-binding motif) with SHANK3 (PubMed:38233523). Interacts (via PDZ-binding motif) with DLG4 (PubMed:38233523).</text>
</comment>
<comment type="interaction">
    <interactant intactId="EBI-770665">
        <id>Q80TS3</id>
    </interactant>
    <interactant intactId="EBI-16146541">
        <id>Q8BLU0</id>
        <label>Flrt2</label>
    </interactant>
    <organismsDiffer>false</organismsDiffer>
    <experiments>2</experiments>
</comment>
<comment type="interaction">
    <interactant intactId="EBI-770665">
        <id>Q80TS3</id>
    </interactant>
    <interactant intactId="EBI-16166902">
        <id>Q8BGT1</id>
        <label>Flrt3</label>
    </interactant>
    <organismsDiffer>false</organismsDiffer>
    <experiments>6</experiments>
</comment>
<comment type="subcellular location">
    <subcellularLocation>
        <location evidence="7 9 14">Cell membrane</location>
        <topology evidence="2">Multi-pass membrane protein</topology>
    </subcellularLocation>
    <subcellularLocation>
        <location evidence="12">Postsynaptic cell membrane</location>
        <topology evidence="2">Multi-pass membrane protein</topology>
    </subcellularLocation>
    <subcellularLocation>
        <location evidence="7">Cell projection</location>
        <location evidence="7">Axon</location>
    </subcellularLocation>
    <subcellularLocation>
        <location evidence="7">Cell junction</location>
    </subcellularLocation>
</comment>
<comment type="alternative products">
    <event type="alternative splicing"/>
    <isoform>
        <id>Q80TS3-1</id>
        <name>1</name>
        <name evidence="22">E31(+)</name>
        <sequence type="displayed"/>
    </isoform>
    <isoform>
        <id>Q80TS3-2</id>
        <name>2</name>
        <name evidence="22">E30b(+)</name>
        <sequence type="described" ref="VSP_010121 VSP_010122 VSP_010123"/>
    </isoform>
    <isoform>
        <id>Q80TS3-3</id>
        <name>3</name>
        <sequence type="described" ref="VSP_022142"/>
    </isoform>
    <isoform>
        <id>Q80TS3-4</id>
        <name>4</name>
        <sequence type="described" ref="VSP_022138"/>
    </isoform>
    <isoform>
        <id>Q80TS3-5</id>
        <name>5</name>
        <sequence type="described" ref="VSP_010121"/>
    </isoform>
    <isoform>
        <id>Q80TS3-6</id>
        <name>6</name>
        <sequence type="described" ref="VSP_022139 VSP_022140 VSP_022141"/>
    </isoform>
    <isoform>
        <id>Q80TS3-7</id>
        <name>7</name>
        <name evidence="22">E32(+)</name>
        <sequence type="described" ref="VSP_062563 VSP_010123"/>
    </isoform>
</comment>
<comment type="tissue specificity">
    <text evidence="12">Localizes to postsynaptic spines in non-overlapping dendritic domains of CA1-region pyramidal neurons: specifically localizes to excitatory synapses in the S.oriens and S.radiatum, corresponding to distinct presynaptic inputs onto CA1-region pyramidal neurons.</text>
</comment>
<comment type="domain">
    <text evidence="1">The Stachel sequence (also named stalk) in the C-terminal part of the extracellular domain (ECD) functions as a tethered agonist. In the inactivated receptor, the Stachel sequence (also named stalk) is embedded in the GAIN-B domain, where it adopts a beta-strand conformation. On activation, the Stachel moves into the 7 transmembrane region and adopts a twisted hook-shaped configuration that forms contacts within the receptor, leading to coupling of a G-alpha protein, which activates signaling.</text>
</comment>
<comment type="domain">
    <text evidence="9">The Olfactomedin-like domain is required for the synapse-promoting function and the interaction with FLRT3. The Olfactomedin-like and the SUEL-type lectin domains are required for the interaction with TENM1.</text>
</comment>
<comment type="PTM">
    <text evidence="3 14 17">Autoproteolytically processed at the GPS region of the GAIN-B domain; this cleavage modulates receptor activity.</text>
</comment>
<comment type="PTM">
    <text evidence="9">O-glycosylated (major) and N-glycosylated.</text>
</comment>
<comment type="disruption phenotype">
    <text evidence="8 12">Mutant mice are viable and present no obvious physical phenotype, except a decreased body weight (PubMed:22575564, PubMed:30792275). Compared to wild-type, mutants are hyperactive, and their dorsal striatum contains higher levels of the neurotransmitters dopamine and serotonin (PubMed:22575564). Cocaine treatment causes a higher increase in locomotor activity than in wild-type (PubMed:22575564). Impaired formation of excitatory synapses, characterized by a significant loss of spines in the S.oriens and S.radiatum, but not in the S.lacunosum-moleculare (PubMed:30792275). Inhibitory synapses are not affected (PubMed:30792275).</text>
</comment>
<comment type="similarity">
    <text evidence="23">Belongs to the G-protein coupled receptor 2 family. LN-TM7 subfamily.</text>
</comment>